<dbReference type="EMBL" id="AF006665">
    <property type="protein sequence ID" value="AAB81160.1"/>
    <property type="status" value="ALT_INIT"/>
    <property type="molecule type" value="Genomic_DNA"/>
</dbReference>
<dbReference type="EMBL" id="AL009126">
    <property type="protein sequence ID" value="CAX52642.1"/>
    <property type="molecule type" value="Genomic_DNA"/>
</dbReference>
<dbReference type="RefSeq" id="WP_004399539.1">
    <property type="nucleotide sequence ID" value="NZ_OZ025638.1"/>
</dbReference>
<dbReference type="RefSeq" id="YP_003097745.1">
    <property type="nucleotide sequence ID" value="NC_000964.3"/>
</dbReference>
<dbReference type="SMR" id="C0H434"/>
<dbReference type="FunCoup" id="C0H434">
    <property type="interactions" value="28"/>
</dbReference>
<dbReference type="STRING" id="224308.BSU19689"/>
<dbReference type="PaxDb" id="224308-BSU19689"/>
<dbReference type="EnsemblBacteria" id="CAX52642">
    <property type="protein sequence ID" value="CAX52642"/>
    <property type="gene ID" value="BSU_19689"/>
</dbReference>
<dbReference type="GeneID" id="8303010"/>
<dbReference type="KEGG" id="bsu:BSU19689"/>
<dbReference type="PATRIC" id="fig|224308.179.peg.2155"/>
<dbReference type="eggNOG" id="ENOG50348TV">
    <property type="taxonomic scope" value="Bacteria"/>
</dbReference>
<dbReference type="InParanoid" id="C0H434"/>
<dbReference type="OrthoDB" id="2666319at2"/>
<dbReference type="BioCyc" id="BSUB:BSU19689-MONOMER"/>
<dbReference type="Proteomes" id="UP000001570">
    <property type="component" value="Chromosome"/>
</dbReference>
<dbReference type="CDD" id="cd12870">
    <property type="entry name" value="MqsA"/>
    <property type="match status" value="1"/>
</dbReference>
<dbReference type="InterPro" id="IPR022451">
    <property type="entry name" value="CHP03829_YokU"/>
</dbReference>
<dbReference type="InterPro" id="IPR022453">
    <property type="entry name" value="Znf_MqsA-type"/>
</dbReference>
<dbReference type="NCBIfam" id="TIGR03831">
    <property type="entry name" value="YgiT_finger"/>
    <property type="match status" value="1"/>
</dbReference>
<dbReference type="NCBIfam" id="TIGR03829">
    <property type="entry name" value="YokU_near_AblA"/>
    <property type="match status" value="1"/>
</dbReference>
<dbReference type="Pfam" id="PF14122">
    <property type="entry name" value="YokU"/>
    <property type="match status" value="1"/>
</dbReference>
<protein>
    <recommendedName>
        <fullName>Uncharacterized protein YokU</fullName>
    </recommendedName>
</protein>
<evidence type="ECO:0000305" key="1"/>
<reference key="1">
    <citation type="journal article" date="1998" name="DNA Res.">
        <title>Sequence analysis of the Bacillus subtilis 168 chromosome region between the sspC and odhA loci (184 degrees-180 degrees).</title>
        <authorList>
            <person name="Ghim S.-Y."/>
            <person name="Choi S.-K."/>
            <person name="Shin B.-S."/>
            <person name="Jeong Y.-M."/>
            <person name="Sorokin A."/>
            <person name="Ehrlich S.D."/>
            <person name="Park S.-H."/>
        </authorList>
    </citation>
    <scope>NUCLEOTIDE SEQUENCE [GENOMIC DNA]</scope>
    <source>
        <strain>168</strain>
    </source>
</reference>
<reference key="2">
    <citation type="journal article" date="1997" name="Nature">
        <title>The complete genome sequence of the Gram-positive bacterium Bacillus subtilis.</title>
        <authorList>
            <person name="Kunst F."/>
            <person name="Ogasawara N."/>
            <person name="Moszer I."/>
            <person name="Albertini A.M."/>
            <person name="Alloni G."/>
            <person name="Azevedo V."/>
            <person name="Bertero M.G."/>
            <person name="Bessieres P."/>
            <person name="Bolotin A."/>
            <person name="Borchert S."/>
            <person name="Borriss R."/>
            <person name="Boursier L."/>
            <person name="Brans A."/>
            <person name="Braun M."/>
            <person name="Brignell S.C."/>
            <person name="Bron S."/>
            <person name="Brouillet S."/>
            <person name="Bruschi C.V."/>
            <person name="Caldwell B."/>
            <person name="Capuano V."/>
            <person name="Carter N.M."/>
            <person name="Choi S.-K."/>
            <person name="Codani J.-J."/>
            <person name="Connerton I.F."/>
            <person name="Cummings N.J."/>
            <person name="Daniel R.A."/>
            <person name="Denizot F."/>
            <person name="Devine K.M."/>
            <person name="Duesterhoeft A."/>
            <person name="Ehrlich S.D."/>
            <person name="Emmerson P.T."/>
            <person name="Entian K.-D."/>
            <person name="Errington J."/>
            <person name="Fabret C."/>
            <person name="Ferrari E."/>
            <person name="Foulger D."/>
            <person name="Fritz C."/>
            <person name="Fujita M."/>
            <person name="Fujita Y."/>
            <person name="Fuma S."/>
            <person name="Galizzi A."/>
            <person name="Galleron N."/>
            <person name="Ghim S.-Y."/>
            <person name="Glaser P."/>
            <person name="Goffeau A."/>
            <person name="Golightly E.J."/>
            <person name="Grandi G."/>
            <person name="Guiseppi G."/>
            <person name="Guy B.J."/>
            <person name="Haga K."/>
            <person name="Haiech J."/>
            <person name="Harwood C.R."/>
            <person name="Henaut A."/>
            <person name="Hilbert H."/>
            <person name="Holsappel S."/>
            <person name="Hosono S."/>
            <person name="Hullo M.-F."/>
            <person name="Itaya M."/>
            <person name="Jones L.-M."/>
            <person name="Joris B."/>
            <person name="Karamata D."/>
            <person name="Kasahara Y."/>
            <person name="Klaerr-Blanchard M."/>
            <person name="Klein C."/>
            <person name="Kobayashi Y."/>
            <person name="Koetter P."/>
            <person name="Koningstein G."/>
            <person name="Krogh S."/>
            <person name="Kumano M."/>
            <person name="Kurita K."/>
            <person name="Lapidus A."/>
            <person name="Lardinois S."/>
            <person name="Lauber J."/>
            <person name="Lazarevic V."/>
            <person name="Lee S.-M."/>
            <person name="Levine A."/>
            <person name="Liu H."/>
            <person name="Masuda S."/>
            <person name="Mauel C."/>
            <person name="Medigue C."/>
            <person name="Medina N."/>
            <person name="Mellado R.P."/>
            <person name="Mizuno M."/>
            <person name="Moestl D."/>
            <person name="Nakai S."/>
            <person name="Noback M."/>
            <person name="Noone D."/>
            <person name="O'Reilly M."/>
            <person name="Ogawa K."/>
            <person name="Ogiwara A."/>
            <person name="Oudega B."/>
            <person name="Park S.-H."/>
            <person name="Parro V."/>
            <person name="Pohl T.M."/>
            <person name="Portetelle D."/>
            <person name="Porwollik S."/>
            <person name="Prescott A.M."/>
            <person name="Presecan E."/>
            <person name="Pujic P."/>
            <person name="Purnelle B."/>
            <person name="Rapoport G."/>
            <person name="Rey M."/>
            <person name="Reynolds S."/>
            <person name="Rieger M."/>
            <person name="Rivolta C."/>
            <person name="Rocha E."/>
            <person name="Roche B."/>
            <person name="Rose M."/>
            <person name="Sadaie Y."/>
            <person name="Sato T."/>
            <person name="Scanlan E."/>
            <person name="Schleich S."/>
            <person name="Schroeter R."/>
            <person name="Scoffone F."/>
            <person name="Sekiguchi J."/>
            <person name="Sekowska A."/>
            <person name="Seror S.J."/>
            <person name="Serror P."/>
            <person name="Shin B.-S."/>
            <person name="Soldo B."/>
            <person name="Sorokin A."/>
            <person name="Tacconi E."/>
            <person name="Takagi T."/>
            <person name="Takahashi H."/>
            <person name="Takemaru K."/>
            <person name="Takeuchi M."/>
            <person name="Tamakoshi A."/>
            <person name="Tanaka T."/>
            <person name="Terpstra P."/>
            <person name="Tognoni A."/>
            <person name="Tosato V."/>
            <person name="Uchiyama S."/>
            <person name="Vandenbol M."/>
            <person name="Vannier F."/>
            <person name="Vassarotti A."/>
            <person name="Viari A."/>
            <person name="Wambutt R."/>
            <person name="Wedler E."/>
            <person name="Wedler H."/>
            <person name="Weitzenegger T."/>
            <person name="Winters P."/>
            <person name="Wipat A."/>
            <person name="Yamamoto H."/>
            <person name="Yamane K."/>
            <person name="Yasumoto K."/>
            <person name="Yata K."/>
            <person name="Yoshida K."/>
            <person name="Yoshikawa H.-F."/>
            <person name="Zumstein E."/>
            <person name="Yoshikawa H."/>
            <person name="Danchin A."/>
        </authorList>
    </citation>
    <scope>NUCLEOTIDE SEQUENCE [LARGE SCALE GENOMIC DNA]</scope>
    <source>
        <strain>168</strain>
    </source>
</reference>
<sequence>MKTCEWCGELEAVPGRNTVYWELPDGTRAIELTDTPAMVCSSCGMTYQEENTVKEIEDQLLLIQTKKLPESLTYQQLMETERILKRNYFDFS</sequence>
<proteinExistence type="predicted"/>
<organism>
    <name type="scientific">Bacillus subtilis (strain 168)</name>
    <dbReference type="NCBI Taxonomy" id="224308"/>
    <lineage>
        <taxon>Bacteria</taxon>
        <taxon>Bacillati</taxon>
        <taxon>Bacillota</taxon>
        <taxon>Bacilli</taxon>
        <taxon>Bacillales</taxon>
        <taxon>Bacillaceae</taxon>
        <taxon>Bacillus</taxon>
    </lineage>
</organism>
<comment type="sequence caution" evidence="1">
    <conflict type="erroneous initiation">
        <sequence resource="EMBL-CDS" id="AAB81160"/>
    </conflict>
</comment>
<keyword id="KW-1185">Reference proteome</keyword>
<gene>
    <name type="primary">yokU</name>
    <name type="ordered locus">BSU19689</name>
</gene>
<accession>C0H434</accession>
<accession>O30470</accession>
<feature type="chain" id="PRO_0000380080" description="Uncharacterized protein YokU">
    <location>
        <begin position="1"/>
        <end position="92"/>
    </location>
</feature>
<feature type="sequence conflict" description="In Ref. 1; AAB81160." evidence="1" ref="1">
    <original>T</original>
    <variation>I</variation>
    <location>
        <position position="46"/>
    </location>
</feature>
<name>YOKU_BACSU</name>